<sequence>MGKPVVAIVGRPNVGKSTIFNRIAGERISIVEDTPGVTRDRIYSSAEWLNYDFNLIDTGGIDIGDEPFLTQIRQQAEIAMDEADVIIFMVNGREGVTSADEEVAKILYRTKKPVVLAVNKLDNTEMRANIYDFYALGFGEPYPISGTHGLGLGDLLDACAEHFKNIPETKYSDDVVQFCLIGRPNVGKSSLVNAMLGEERVIVSNVAGTTRDAVDTAFTYNQQEFVIVDTAGMRKKGKVYETTEKYSVLRALKAIDRSDVVGVVLNAEEGILEQDKRIAGYAHEAGKAVVIIVNKWDAVDKDERTMKEFEQNIREHFQFLDYAPVLFMSALTTKRIHTLMPAIIKASENHSLRVQTNVLNDVIMDAVAMNPTPTHNGSRLKIYYATQVAVKPPSFVVFVNDPELMHFSYERFLENRIRDAFGFEGTPIKIFARARK</sequence>
<protein>
    <recommendedName>
        <fullName evidence="1">GTPase Der</fullName>
    </recommendedName>
    <alternativeName>
        <fullName evidence="1">GTP-binding protein EngA</fullName>
    </alternativeName>
</protein>
<name>DER_BACVZ</name>
<accession>A7Z636</accession>
<proteinExistence type="inferred from homology"/>
<organism>
    <name type="scientific">Bacillus velezensis (strain DSM 23117 / BGSC 10A6 / LMG 26770 / FZB42)</name>
    <name type="common">Bacillus amyloliquefaciens subsp. plantarum</name>
    <dbReference type="NCBI Taxonomy" id="326423"/>
    <lineage>
        <taxon>Bacteria</taxon>
        <taxon>Bacillati</taxon>
        <taxon>Bacillota</taxon>
        <taxon>Bacilli</taxon>
        <taxon>Bacillales</taxon>
        <taxon>Bacillaceae</taxon>
        <taxon>Bacillus</taxon>
        <taxon>Bacillus amyloliquefaciens group</taxon>
    </lineage>
</organism>
<comment type="function">
    <text evidence="1">GTPase that plays an essential role in the late steps of ribosome biogenesis.</text>
</comment>
<comment type="subunit">
    <text evidence="1">Associates with the 50S ribosomal subunit.</text>
</comment>
<comment type="similarity">
    <text evidence="1">Belongs to the TRAFAC class TrmE-Era-EngA-EngB-Septin-like GTPase superfamily. EngA (Der) GTPase family.</text>
</comment>
<dbReference type="EMBL" id="CP000560">
    <property type="protein sequence ID" value="ABS74462.1"/>
    <property type="molecule type" value="Genomic_DNA"/>
</dbReference>
<dbReference type="RefSeq" id="WP_003153433.1">
    <property type="nucleotide sequence ID" value="NC_009725.2"/>
</dbReference>
<dbReference type="SMR" id="A7Z636"/>
<dbReference type="GeneID" id="93081235"/>
<dbReference type="KEGG" id="bay:RBAM_021000"/>
<dbReference type="HOGENOM" id="CLU_016077_6_2_9"/>
<dbReference type="Proteomes" id="UP000001120">
    <property type="component" value="Chromosome"/>
</dbReference>
<dbReference type="GO" id="GO:0005525">
    <property type="term" value="F:GTP binding"/>
    <property type="evidence" value="ECO:0007669"/>
    <property type="project" value="UniProtKB-UniRule"/>
</dbReference>
<dbReference type="GO" id="GO:0043022">
    <property type="term" value="F:ribosome binding"/>
    <property type="evidence" value="ECO:0007669"/>
    <property type="project" value="TreeGrafter"/>
</dbReference>
<dbReference type="GO" id="GO:0042254">
    <property type="term" value="P:ribosome biogenesis"/>
    <property type="evidence" value="ECO:0007669"/>
    <property type="project" value="UniProtKB-KW"/>
</dbReference>
<dbReference type="CDD" id="cd01894">
    <property type="entry name" value="EngA1"/>
    <property type="match status" value="1"/>
</dbReference>
<dbReference type="CDD" id="cd01895">
    <property type="entry name" value="EngA2"/>
    <property type="match status" value="1"/>
</dbReference>
<dbReference type="FunFam" id="3.30.300.20:FF:000004">
    <property type="entry name" value="GTPase Der"/>
    <property type="match status" value="1"/>
</dbReference>
<dbReference type="FunFam" id="3.40.50.300:FF:000040">
    <property type="entry name" value="GTPase Der"/>
    <property type="match status" value="1"/>
</dbReference>
<dbReference type="FunFam" id="3.40.50.300:FF:000057">
    <property type="entry name" value="GTPase Der"/>
    <property type="match status" value="1"/>
</dbReference>
<dbReference type="Gene3D" id="3.30.300.20">
    <property type="match status" value="1"/>
</dbReference>
<dbReference type="Gene3D" id="3.40.50.300">
    <property type="entry name" value="P-loop containing nucleotide triphosphate hydrolases"/>
    <property type="match status" value="2"/>
</dbReference>
<dbReference type="HAMAP" id="MF_00195">
    <property type="entry name" value="GTPase_Der"/>
    <property type="match status" value="1"/>
</dbReference>
<dbReference type="InterPro" id="IPR031166">
    <property type="entry name" value="G_ENGA"/>
</dbReference>
<dbReference type="InterPro" id="IPR006073">
    <property type="entry name" value="GTP-bd"/>
</dbReference>
<dbReference type="InterPro" id="IPR016484">
    <property type="entry name" value="GTPase_Der"/>
</dbReference>
<dbReference type="InterPro" id="IPR032859">
    <property type="entry name" value="KH_dom-like"/>
</dbReference>
<dbReference type="InterPro" id="IPR015946">
    <property type="entry name" value="KH_dom-like_a/b"/>
</dbReference>
<dbReference type="InterPro" id="IPR027417">
    <property type="entry name" value="P-loop_NTPase"/>
</dbReference>
<dbReference type="InterPro" id="IPR005225">
    <property type="entry name" value="Small_GTP-bd"/>
</dbReference>
<dbReference type="NCBIfam" id="TIGR03594">
    <property type="entry name" value="GTPase_EngA"/>
    <property type="match status" value="1"/>
</dbReference>
<dbReference type="NCBIfam" id="TIGR00231">
    <property type="entry name" value="small_GTP"/>
    <property type="match status" value="2"/>
</dbReference>
<dbReference type="PANTHER" id="PTHR43834">
    <property type="entry name" value="GTPASE DER"/>
    <property type="match status" value="1"/>
</dbReference>
<dbReference type="PANTHER" id="PTHR43834:SF6">
    <property type="entry name" value="GTPASE DER"/>
    <property type="match status" value="1"/>
</dbReference>
<dbReference type="Pfam" id="PF14714">
    <property type="entry name" value="KH_dom-like"/>
    <property type="match status" value="1"/>
</dbReference>
<dbReference type="Pfam" id="PF01926">
    <property type="entry name" value="MMR_HSR1"/>
    <property type="match status" value="2"/>
</dbReference>
<dbReference type="PIRSF" id="PIRSF006485">
    <property type="entry name" value="GTP-binding_EngA"/>
    <property type="match status" value="1"/>
</dbReference>
<dbReference type="SUPFAM" id="SSF52540">
    <property type="entry name" value="P-loop containing nucleoside triphosphate hydrolases"/>
    <property type="match status" value="2"/>
</dbReference>
<dbReference type="PROSITE" id="PS51712">
    <property type="entry name" value="G_ENGA"/>
    <property type="match status" value="2"/>
</dbReference>
<reference key="1">
    <citation type="journal article" date="2007" name="Nat. Biotechnol.">
        <title>Comparative analysis of the complete genome sequence of the plant growth-promoting bacterium Bacillus amyloliquefaciens FZB42.</title>
        <authorList>
            <person name="Chen X.H."/>
            <person name="Koumoutsi A."/>
            <person name="Scholz R."/>
            <person name="Eisenreich A."/>
            <person name="Schneider K."/>
            <person name="Heinemeyer I."/>
            <person name="Morgenstern B."/>
            <person name="Voss B."/>
            <person name="Hess W.R."/>
            <person name="Reva O."/>
            <person name="Junge H."/>
            <person name="Voigt B."/>
            <person name="Jungblut P.R."/>
            <person name="Vater J."/>
            <person name="Suessmuth R."/>
            <person name="Liesegang H."/>
            <person name="Strittmatter A."/>
            <person name="Gottschalk G."/>
            <person name="Borriss R."/>
        </authorList>
    </citation>
    <scope>NUCLEOTIDE SEQUENCE [LARGE SCALE GENOMIC DNA]</scope>
    <source>
        <strain>DSM 23117 / BGSC 10A6 / LMG 26770 / FZB42</strain>
    </source>
</reference>
<keyword id="KW-0342">GTP-binding</keyword>
<keyword id="KW-0547">Nucleotide-binding</keyword>
<keyword id="KW-0677">Repeat</keyword>
<keyword id="KW-0690">Ribosome biogenesis</keyword>
<feature type="chain" id="PRO_1000011558" description="GTPase Der">
    <location>
        <begin position="1"/>
        <end position="436"/>
    </location>
</feature>
<feature type="domain" description="EngA-type G 1">
    <location>
        <begin position="4"/>
        <end position="167"/>
    </location>
</feature>
<feature type="domain" description="EngA-type G 2">
    <location>
        <begin position="176"/>
        <end position="351"/>
    </location>
</feature>
<feature type="domain" description="KH-like" evidence="1">
    <location>
        <begin position="352"/>
        <end position="436"/>
    </location>
</feature>
<feature type="binding site" evidence="1">
    <location>
        <begin position="10"/>
        <end position="17"/>
    </location>
    <ligand>
        <name>GTP</name>
        <dbReference type="ChEBI" id="CHEBI:37565"/>
        <label>1</label>
    </ligand>
</feature>
<feature type="binding site" evidence="1">
    <location>
        <begin position="57"/>
        <end position="61"/>
    </location>
    <ligand>
        <name>GTP</name>
        <dbReference type="ChEBI" id="CHEBI:37565"/>
        <label>1</label>
    </ligand>
</feature>
<feature type="binding site" evidence="1">
    <location>
        <begin position="119"/>
        <end position="122"/>
    </location>
    <ligand>
        <name>GTP</name>
        <dbReference type="ChEBI" id="CHEBI:37565"/>
        <label>1</label>
    </ligand>
</feature>
<feature type="binding site" evidence="1">
    <location>
        <begin position="182"/>
        <end position="189"/>
    </location>
    <ligand>
        <name>GTP</name>
        <dbReference type="ChEBI" id="CHEBI:37565"/>
        <label>2</label>
    </ligand>
</feature>
<feature type="binding site" evidence="1">
    <location>
        <begin position="229"/>
        <end position="233"/>
    </location>
    <ligand>
        <name>GTP</name>
        <dbReference type="ChEBI" id="CHEBI:37565"/>
        <label>2</label>
    </ligand>
</feature>
<feature type="binding site" evidence="1">
    <location>
        <begin position="294"/>
        <end position="297"/>
    </location>
    <ligand>
        <name>GTP</name>
        <dbReference type="ChEBI" id="CHEBI:37565"/>
        <label>2</label>
    </ligand>
</feature>
<gene>
    <name evidence="1" type="primary">der</name>
    <name type="synonym">engA</name>
    <name type="ordered locus">RBAM_021000</name>
</gene>
<evidence type="ECO:0000255" key="1">
    <source>
        <dbReference type="HAMAP-Rule" id="MF_00195"/>
    </source>
</evidence>